<protein>
    <recommendedName>
        <fullName evidence="7">Dye-decolorizing peroxidase</fullName>
        <shortName evidence="7">DyP</shortName>
        <ecNumber evidence="3">1.11.1.7</ecNumber>
    </recommendedName>
</protein>
<organism>
    <name type="scientific">Mycolicibacterium paratuberculosis (strain ATCC BAA-968 / K-10)</name>
    <name type="common">Mycobacterium paratuberculosis</name>
    <dbReference type="NCBI Taxonomy" id="262316"/>
    <lineage>
        <taxon>Bacteria</taxon>
        <taxon>Bacillati</taxon>
        <taxon>Actinomycetota</taxon>
        <taxon>Actinomycetes</taxon>
        <taxon>Mycobacteriales</taxon>
        <taxon>Mycobacteriaceae</taxon>
        <taxon>Mycobacterium</taxon>
        <taxon>Mycobacterium avium complex (MAC)</taxon>
    </lineage>
</organism>
<gene>
    <name type="ordered locus">MAP_0631c</name>
</gene>
<feature type="chain" id="PRO_0000455326" description="Dye-decolorizing peroxidase">
    <location>
        <begin position="1"/>
        <end position="354"/>
    </location>
</feature>
<feature type="region of interest" description="Targeting peptide" evidence="3">
    <location>
        <begin position="312"/>
        <end position="335"/>
    </location>
</feature>
<feature type="region of interest" description="Disordered" evidence="5">
    <location>
        <begin position="324"/>
        <end position="354"/>
    </location>
</feature>
<feature type="compositionally biased region" description="Pro residues" evidence="5">
    <location>
        <begin position="324"/>
        <end position="337"/>
    </location>
</feature>
<feature type="compositionally biased region" description="Polar residues" evidence="5">
    <location>
        <begin position="342"/>
        <end position="354"/>
    </location>
</feature>
<feature type="active site" description="Proton acceptor" evidence="4">
    <location>
        <position position="165"/>
    </location>
</feature>
<feature type="binding site" description="proximal binding residue" evidence="4">
    <location>
        <position position="238"/>
    </location>
    <ligand>
        <name>heme</name>
        <dbReference type="ChEBI" id="CHEBI:30413"/>
    </ligand>
    <ligandPart>
        <name>Fe</name>
        <dbReference type="ChEBI" id="CHEBI:18248"/>
    </ligandPart>
</feature>
<evidence type="ECO:0000250" key="1">
    <source>
        <dbReference type="UniProtKB" id="A0A3T0E4B9"/>
    </source>
</evidence>
<evidence type="ECO:0000250" key="2">
    <source>
        <dbReference type="UniProtKB" id="I6WZG6"/>
    </source>
</evidence>
<evidence type="ECO:0000250" key="3">
    <source>
        <dbReference type="UniProtKB" id="I6Y4U9"/>
    </source>
</evidence>
<evidence type="ECO:0000250" key="4">
    <source>
        <dbReference type="UniProtKB" id="Q47KB1"/>
    </source>
</evidence>
<evidence type="ECO:0000256" key="5">
    <source>
        <dbReference type="SAM" id="MobiDB-lite"/>
    </source>
</evidence>
<evidence type="ECO:0000269" key="6">
    <source>
    </source>
</evidence>
<evidence type="ECO:0000303" key="7">
    <source>
    </source>
</evidence>
<evidence type="ECO:0000305" key="8"/>
<evidence type="ECO:0000305" key="9">
    <source>
    </source>
</evidence>
<dbReference type="EC" id="1.11.1.7" evidence="3"/>
<dbReference type="EMBL" id="AE016958">
    <property type="protein sequence ID" value="AAS02948.1"/>
    <property type="molecule type" value="Genomic_DNA"/>
</dbReference>
<dbReference type="SMR" id="Q743F4"/>
<dbReference type="STRING" id="262316.MAP_0631c"/>
<dbReference type="PeroxiBase" id="5527">
    <property type="entry name" value="MavpDyPrx02"/>
</dbReference>
<dbReference type="KEGG" id="mpa:MAP_0631c"/>
<dbReference type="eggNOG" id="COG2837">
    <property type="taxonomic scope" value="Bacteria"/>
</dbReference>
<dbReference type="HOGENOM" id="CLU_044178_1_0_11"/>
<dbReference type="Proteomes" id="UP000000580">
    <property type="component" value="Chromosome"/>
</dbReference>
<dbReference type="GO" id="GO:0005829">
    <property type="term" value="C:cytosol"/>
    <property type="evidence" value="ECO:0007669"/>
    <property type="project" value="TreeGrafter"/>
</dbReference>
<dbReference type="GO" id="GO:0140737">
    <property type="term" value="C:encapsulin nanocompartment"/>
    <property type="evidence" value="ECO:0007669"/>
    <property type="project" value="UniProtKB-SubCell"/>
</dbReference>
<dbReference type="GO" id="GO:0005886">
    <property type="term" value="C:plasma membrane"/>
    <property type="evidence" value="ECO:0007669"/>
    <property type="project" value="UniProtKB-SubCell"/>
</dbReference>
<dbReference type="GO" id="GO:0020037">
    <property type="term" value="F:heme binding"/>
    <property type="evidence" value="ECO:0007669"/>
    <property type="project" value="InterPro"/>
</dbReference>
<dbReference type="GO" id="GO:0046872">
    <property type="term" value="F:metal ion binding"/>
    <property type="evidence" value="ECO:0007669"/>
    <property type="project" value="UniProtKB-KW"/>
</dbReference>
<dbReference type="GO" id="GO:0004601">
    <property type="term" value="F:peroxidase activity"/>
    <property type="evidence" value="ECO:0007669"/>
    <property type="project" value="UniProtKB-KW"/>
</dbReference>
<dbReference type="InterPro" id="IPR011008">
    <property type="entry name" value="Dimeric_a/b-barrel"/>
</dbReference>
<dbReference type="InterPro" id="IPR048328">
    <property type="entry name" value="Dyp_perox_C"/>
</dbReference>
<dbReference type="InterPro" id="IPR048327">
    <property type="entry name" value="Dyp_perox_N"/>
</dbReference>
<dbReference type="InterPro" id="IPR006314">
    <property type="entry name" value="Dyp_peroxidase"/>
</dbReference>
<dbReference type="NCBIfam" id="TIGR01413">
    <property type="entry name" value="Dyp_perox_fam"/>
    <property type="match status" value="1"/>
</dbReference>
<dbReference type="PANTHER" id="PTHR30521">
    <property type="entry name" value="DEFERROCHELATASE/PEROXIDASE"/>
    <property type="match status" value="1"/>
</dbReference>
<dbReference type="PANTHER" id="PTHR30521:SF0">
    <property type="entry name" value="DYP-TYPE PEROXIDASE FAMILY PROTEIN"/>
    <property type="match status" value="1"/>
</dbReference>
<dbReference type="Pfam" id="PF20628">
    <property type="entry name" value="Dyp_perox_C"/>
    <property type="match status" value="1"/>
</dbReference>
<dbReference type="Pfam" id="PF04261">
    <property type="entry name" value="Dyp_perox_N"/>
    <property type="match status" value="1"/>
</dbReference>
<dbReference type="SUPFAM" id="SSF54909">
    <property type="entry name" value="Dimeric alpha+beta barrel"/>
    <property type="match status" value="1"/>
</dbReference>
<dbReference type="PROSITE" id="PS51404">
    <property type="entry name" value="DYP_PEROXIDASE"/>
    <property type="match status" value="1"/>
</dbReference>
<accession>Q743F4</accession>
<keyword id="KW-1003">Cell membrane</keyword>
<keyword id="KW-1284">Encapsulin nanocompartment</keyword>
<keyword id="KW-0408">Iron</keyword>
<keyword id="KW-0472">Membrane</keyword>
<keyword id="KW-0479">Metal-binding</keyword>
<keyword id="KW-0560">Oxidoreductase</keyword>
<keyword id="KW-0575">Peroxidase</keyword>
<keyword id="KW-1185">Reference proteome</keyword>
<reference key="1">
    <citation type="journal article" date="2005" name="Proc. Natl. Acad. Sci. U.S.A.">
        <title>The complete genome sequence of Mycobacterium avium subspecies paratuberculosis.</title>
        <authorList>
            <person name="Li L."/>
            <person name="Bannantine J.P."/>
            <person name="Zhang Q."/>
            <person name="Amonsin A."/>
            <person name="May B.J."/>
            <person name="Alt D."/>
            <person name="Banerji N."/>
            <person name="Kanjilal S."/>
            <person name="Kapur V."/>
        </authorList>
    </citation>
    <scope>NUCLEOTIDE SEQUENCE [LARGE SCALE GENOMIC DNA]</scope>
    <source>
        <strain>ATCC BAA-968 / K-10</strain>
    </source>
</reference>
<reference key="2">
    <citation type="journal article" date="2015" name="Vet. Microbiol.">
        <title>Envelope protein complexes of Mycobacterium avium subsp. paratuberculosis and their antigenicity.</title>
        <authorList>
            <person name="Leite F.L."/>
            <person name="Reinhardt T.A."/>
            <person name="Bannantine J.P."/>
            <person name="Stabel J.R."/>
        </authorList>
    </citation>
    <scope>IDENTIFICATION BY MASS SPECTROMETRY</scope>
    <scope>INTERACTION WITH TYPE 1 ENCAPSULIN</scope>
    <scope>SUBUNIT</scope>
    <scope>SUBCELLULAR LOCATION</scope>
    <scope>ANTIGENICITY</scope>
    <source>
        <strain>509</strain>
    </source>
</reference>
<name>DYP_MYCPA</name>
<comment type="function">
    <text evidence="2 3">Cargo protein of a type 1 encapsulin nanocompartment. A heme-dependent peroxidase (By similarity). This cargo-loaded encapsulin nanocompartment is probably involved in protection against oxidative damage (By similarity).</text>
</comment>
<comment type="catalytic activity">
    <reaction evidence="3">
        <text>2 a phenolic donor + H2O2 = 2 a phenolic radical donor + 2 H2O</text>
        <dbReference type="Rhea" id="RHEA:56136"/>
        <dbReference type="ChEBI" id="CHEBI:15377"/>
        <dbReference type="ChEBI" id="CHEBI:16240"/>
        <dbReference type="ChEBI" id="CHEBI:139520"/>
        <dbReference type="ChEBI" id="CHEBI:139521"/>
        <dbReference type="EC" id="1.11.1.7"/>
    </reaction>
</comment>
<comment type="cofactor">
    <cofactor evidence="3">
        <name>heme b</name>
        <dbReference type="ChEBI" id="CHEBI:60344"/>
    </cofactor>
</comment>
<comment type="subunit">
    <text evidence="3 6">Found in a complex with type 1 encapsulin, strongly suggesting it is found in a type 1 encapsulin nanocompartment (PubMed:25500374). Homotetramer, presumably also in the type 1 encapsulin nanocompartment (By similarity).</text>
</comment>
<comment type="subcellular location">
    <subcellularLocation>
        <location evidence="1 8">Encapsulin nanocompartment</location>
    </subcellularLocation>
    <subcellularLocation>
        <location evidence="9">Cell membrane</location>
    </subcellularLocation>
</comment>
<comment type="domain">
    <text evidence="3">The C-terminus (residues 312-335) targets the protein to the type 1 encapsulin nanocompartment.</text>
</comment>
<comment type="similarity">
    <text evidence="8">Belongs to the DyP-type peroxidase family.</text>
</comment>
<sequence>MVNIVAVRRHGVHVRVIHVPPVQPQPILAPLTPAAIFLVLTVDDGGEATVHEALQDISGLVRAIGFREPQKRLSAIASIGSDVWDRLFSGPRPAELHRFVELHGPRHTAPATPGDLLFHIRAESLDVCFELADRILKSMAGAVTVVDEVHGFRYFDNRDLLGFVDGTENPDGALAVSSTAIGDEDPDFAGSCYVHVQKYLHDMSAWTALSVTEQENVIGRTKLDDIELDDDVKPADAHIALNVITDDDGTELKIVRHNMPFGELGKSEYGTYFIGYSRTPRVTEQMLRNMFLGDPPGNTDRILDFSTAVTGGLFFSPTVDFLDDPPPLPAPGTPAAPPARNGSLSIGSLKGTTR</sequence>
<proteinExistence type="evidence at protein level"/>